<protein>
    <recommendedName>
        <fullName>Rho GTPase-activating protein gacJ</fullName>
    </recommendedName>
    <alternativeName>
        <fullName>GTPase activating factor for raC protein J</fullName>
    </alternativeName>
</protein>
<accession>Q54MV3</accession>
<gene>
    <name type="primary">gacJ</name>
    <name type="ORF">DDB_G0285641</name>
</gene>
<name>GACJ_DICDI</name>
<evidence type="ECO:0000250" key="1"/>
<evidence type="ECO:0000255" key="2">
    <source>
        <dbReference type="PROSITE-ProRule" id="PRU00172"/>
    </source>
</evidence>
<evidence type="ECO:0000256" key="3">
    <source>
        <dbReference type="SAM" id="MobiDB-lite"/>
    </source>
</evidence>
<dbReference type="EMBL" id="AAFI02000079">
    <property type="protein sequence ID" value="EAL64658.1"/>
    <property type="molecule type" value="Genomic_DNA"/>
</dbReference>
<dbReference type="RefSeq" id="XP_638190.1">
    <property type="nucleotide sequence ID" value="XM_633098.1"/>
</dbReference>
<dbReference type="SMR" id="Q54MV3"/>
<dbReference type="FunCoup" id="Q54MV3">
    <property type="interactions" value="232"/>
</dbReference>
<dbReference type="STRING" id="44689.Q54MV3"/>
<dbReference type="GlyGen" id="Q54MV3">
    <property type="glycosylation" value="1 site"/>
</dbReference>
<dbReference type="PaxDb" id="44689-DDB0233842"/>
<dbReference type="EnsemblProtists" id="EAL64658">
    <property type="protein sequence ID" value="EAL64658"/>
    <property type="gene ID" value="DDB_G0285641"/>
</dbReference>
<dbReference type="GeneID" id="8625236"/>
<dbReference type="KEGG" id="ddi:DDB_G0285641"/>
<dbReference type="dictyBase" id="DDB_G0285641">
    <property type="gene designation" value="gacJ"/>
</dbReference>
<dbReference type="VEuPathDB" id="AmoebaDB:DDB_G0285641"/>
<dbReference type="eggNOG" id="KOG1453">
    <property type="taxonomic scope" value="Eukaryota"/>
</dbReference>
<dbReference type="HOGENOM" id="CLU_320413_0_0_1"/>
<dbReference type="InParanoid" id="Q54MV3"/>
<dbReference type="OMA" id="REHRRSW"/>
<dbReference type="PRO" id="PR:Q54MV3"/>
<dbReference type="Proteomes" id="UP000002195">
    <property type="component" value="Chromosome 4"/>
</dbReference>
<dbReference type="GO" id="GO:0005737">
    <property type="term" value="C:cytoplasm"/>
    <property type="evidence" value="ECO:0000318"/>
    <property type="project" value="GO_Central"/>
</dbReference>
<dbReference type="GO" id="GO:0005886">
    <property type="term" value="C:plasma membrane"/>
    <property type="evidence" value="ECO:0000318"/>
    <property type="project" value="GO_Central"/>
</dbReference>
<dbReference type="GO" id="GO:0005096">
    <property type="term" value="F:GTPase activator activity"/>
    <property type="evidence" value="ECO:0000318"/>
    <property type="project" value="GO_Central"/>
</dbReference>
<dbReference type="GO" id="GO:0007264">
    <property type="term" value="P:small GTPase-mediated signal transduction"/>
    <property type="evidence" value="ECO:0000318"/>
    <property type="project" value="GO_Central"/>
</dbReference>
<dbReference type="CDD" id="cd00159">
    <property type="entry name" value="RhoGAP"/>
    <property type="match status" value="1"/>
</dbReference>
<dbReference type="Gene3D" id="1.10.555.10">
    <property type="entry name" value="Rho GTPase activation protein"/>
    <property type="match status" value="1"/>
</dbReference>
<dbReference type="InterPro" id="IPR050729">
    <property type="entry name" value="Rho-GAP"/>
</dbReference>
<dbReference type="InterPro" id="IPR008936">
    <property type="entry name" value="Rho_GTPase_activation_prot"/>
</dbReference>
<dbReference type="InterPro" id="IPR000198">
    <property type="entry name" value="RhoGAP_dom"/>
</dbReference>
<dbReference type="PANTHER" id="PTHR23176:SF127">
    <property type="entry name" value="RHO GTPASE-ACTIVATING PROTEIN GACJ"/>
    <property type="match status" value="1"/>
</dbReference>
<dbReference type="PANTHER" id="PTHR23176">
    <property type="entry name" value="RHO/RAC/CDC GTPASE-ACTIVATING PROTEIN"/>
    <property type="match status" value="1"/>
</dbReference>
<dbReference type="Pfam" id="PF00620">
    <property type="entry name" value="RhoGAP"/>
    <property type="match status" value="1"/>
</dbReference>
<dbReference type="SMART" id="SM00324">
    <property type="entry name" value="RhoGAP"/>
    <property type="match status" value="1"/>
</dbReference>
<dbReference type="SUPFAM" id="SSF48350">
    <property type="entry name" value="GTPase activation domain, GAP"/>
    <property type="match status" value="1"/>
</dbReference>
<dbReference type="PROSITE" id="PS50238">
    <property type="entry name" value="RHOGAP"/>
    <property type="match status" value="1"/>
</dbReference>
<feature type="chain" id="PRO_0000380207" description="Rho GTPase-activating protein gacJ">
    <location>
        <begin position="1"/>
        <end position="906"/>
    </location>
</feature>
<feature type="domain" description="Rho-GAP" evidence="2">
    <location>
        <begin position="161"/>
        <end position="348"/>
    </location>
</feature>
<feature type="region of interest" description="Disordered" evidence="3">
    <location>
        <begin position="53"/>
        <end position="117"/>
    </location>
</feature>
<feature type="region of interest" description="Disordered" evidence="3">
    <location>
        <begin position="368"/>
        <end position="415"/>
    </location>
</feature>
<feature type="region of interest" description="Disordered" evidence="3">
    <location>
        <begin position="452"/>
        <end position="864"/>
    </location>
</feature>
<feature type="region of interest" description="Disordered" evidence="3">
    <location>
        <begin position="877"/>
        <end position="906"/>
    </location>
</feature>
<feature type="compositionally biased region" description="Low complexity" evidence="3">
    <location>
        <begin position="69"/>
        <end position="79"/>
    </location>
</feature>
<feature type="compositionally biased region" description="Basic and acidic residues" evidence="3">
    <location>
        <begin position="92"/>
        <end position="117"/>
    </location>
</feature>
<feature type="compositionally biased region" description="Polar residues" evidence="3">
    <location>
        <begin position="381"/>
        <end position="404"/>
    </location>
</feature>
<feature type="compositionally biased region" description="Low complexity" evidence="3">
    <location>
        <begin position="461"/>
        <end position="487"/>
    </location>
</feature>
<feature type="compositionally biased region" description="Pro residues" evidence="3">
    <location>
        <begin position="494"/>
        <end position="510"/>
    </location>
</feature>
<feature type="compositionally biased region" description="Pro residues" evidence="3">
    <location>
        <begin position="547"/>
        <end position="560"/>
    </location>
</feature>
<feature type="compositionally biased region" description="Polar residues" evidence="3">
    <location>
        <begin position="565"/>
        <end position="574"/>
    </location>
</feature>
<feature type="compositionally biased region" description="Low complexity" evidence="3">
    <location>
        <begin position="575"/>
        <end position="597"/>
    </location>
</feature>
<feature type="compositionally biased region" description="Low complexity" evidence="3">
    <location>
        <begin position="613"/>
        <end position="629"/>
    </location>
</feature>
<feature type="compositionally biased region" description="Polar residues" evidence="3">
    <location>
        <begin position="637"/>
        <end position="649"/>
    </location>
</feature>
<feature type="compositionally biased region" description="Low complexity" evidence="3">
    <location>
        <begin position="650"/>
        <end position="663"/>
    </location>
</feature>
<feature type="compositionally biased region" description="Low complexity" evidence="3">
    <location>
        <begin position="683"/>
        <end position="694"/>
    </location>
</feature>
<feature type="compositionally biased region" description="Pro residues" evidence="3">
    <location>
        <begin position="708"/>
        <end position="721"/>
    </location>
</feature>
<feature type="compositionally biased region" description="Low complexity" evidence="3">
    <location>
        <begin position="754"/>
        <end position="772"/>
    </location>
</feature>
<feature type="compositionally biased region" description="Low complexity" evidence="3">
    <location>
        <begin position="785"/>
        <end position="816"/>
    </location>
</feature>
<feature type="compositionally biased region" description="Low complexity" evidence="3">
    <location>
        <begin position="844"/>
        <end position="861"/>
    </location>
</feature>
<feature type="compositionally biased region" description="Polar residues" evidence="3">
    <location>
        <begin position="880"/>
        <end position="890"/>
    </location>
</feature>
<feature type="site" description="Arginine finger; crucial for GTP hydrolysis by stabilizing the transition state" evidence="2">
    <location>
        <position position="196"/>
    </location>
</feature>
<proteinExistence type="inferred from homology"/>
<comment type="function">
    <text evidence="1">Rho GTPase-activating protein involved in the signal transduction pathway.</text>
</comment>
<comment type="subcellular location">
    <subcellularLocation>
        <location evidence="1">Cytoplasm</location>
    </subcellularLocation>
</comment>
<reference key="1">
    <citation type="journal article" date="2005" name="Nature">
        <title>The genome of the social amoeba Dictyostelium discoideum.</title>
        <authorList>
            <person name="Eichinger L."/>
            <person name="Pachebat J.A."/>
            <person name="Gloeckner G."/>
            <person name="Rajandream M.A."/>
            <person name="Sucgang R."/>
            <person name="Berriman M."/>
            <person name="Song J."/>
            <person name="Olsen R."/>
            <person name="Szafranski K."/>
            <person name="Xu Q."/>
            <person name="Tunggal B."/>
            <person name="Kummerfeld S."/>
            <person name="Madera M."/>
            <person name="Konfortov B.A."/>
            <person name="Rivero F."/>
            <person name="Bankier A.T."/>
            <person name="Lehmann R."/>
            <person name="Hamlin N."/>
            <person name="Davies R."/>
            <person name="Gaudet P."/>
            <person name="Fey P."/>
            <person name="Pilcher K."/>
            <person name="Chen G."/>
            <person name="Saunders D."/>
            <person name="Sodergren E.J."/>
            <person name="Davis P."/>
            <person name="Kerhornou A."/>
            <person name="Nie X."/>
            <person name="Hall N."/>
            <person name="Anjard C."/>
            <person name="Hemphill L."/>
            <person name="Bason N."/>
            <person name="Farbrother P."/>
            <person name="Desany B."/>
            <person name="Just E."/>
            <person name="Morio T."/>
            <person name="Rost R."/>
            <person name="Churcher C.M."/>
            <person name="Cooper J."/>
            <person name="Haydock S."/>
            <person name="van Driessche N."/>
            <person name="Cronin A."/>
            <person name="Goodhead I."/>
            <person name="Muzny D.M."/>
            <person name="Mourier T."/>
            <person name="Pain A."/>
            <person name="Lu M."/>
            <person name="Harper D."/>
            <person name="Lindsay R."/>
            <person name="Hauser H."/>
            <person name="James K.D."/>
            <person name="Quiles M."/>
            <person name="Madan Babu M."/>
            <person name="Saito T."/>
            <person name="Buchrieser C."/>
            <person name="Wardroper A."/>
            <person name="Felder M."/>
            <person name="Thangavelu M."/>
            <person name="Johnson D."/>
            <person name="Knights A."/>
            <person name="Loulseged H."/>
            <person name="Mungall K.L."/>
            <person name="Oliver K."/>
            <person name="Price C."/>
            <person name="Quail M.A."/>
            <person name="Urushihara H."/>
            <person name="Hernandez J."/>
            <person name="Rabbinowitsch E."/>
            <person name="Steffen D."/>
            <person name="Sanders M."/>
            <person name="Ma J."/>
            <person name="Kohara Y."/>
            <person name="Sharp S."/>
            <person name="Simmonds M.N."/>
            <person name="Spiegler S."/>
            <person name="Tivey A."/>
            <person name="Sugano S."/>
            <person name="White B."/>
            <person name="Walker D."/>
            <person name="Woodward J.R."/>
            <person name="Winckler T."/>
            <person name="Tanaka Y."/>
            <person name="Shaulsky G."/>
            <person name="Schleicher M."/>
            <person name="Weinstock G.M."/>
            <person name="Rosenthal A."/>
            <person name="Cox E.C."/>
            <person name="Chisholm R.L."/>
            <person name="Gibbs R.A."/>
            <person name="Loomis W.F."/>
            <person name="Platzer M."/>
            <person name="Kay R.R."/>
            <person name="Williams J.G."/>
            <person name="Dear P.H."/>
            <person name="Noegel A.A."/>
            <person name="Barrell B.G."/>
            <person name="Kuspa A."/>
        </authorList>
    </citation>
    <scope>NUCLEOTIDE SEQUENCE [LARGE SCALE GENOMIC DNA]</scope>
    <source>
        <strain>AX4</strain>
    </source>
</reference>
<keyword id="KW-0963">Cytoplasm</keyword>
<keyword id="KW-0343">GTPase activation</keyword>
<keyword id="KW-1185">Reference proteome</keyword>
<sequence>MEEQQPPSIKKKIVDFLTNFLKKRPSHEDLRRDNILVAPNNVSPAIQPSRYELEGHLNPSSHNRDDSSNNNNNNNNNNNTVEYSRGHSKSHSRSDSKHHNRENSKSDRDNSRSDNIRFGRKDTFKNAWDYLRNIDFTFSKTKYGNTVVHRLKHPQFGLSPEELQSLYPDQPHGIPIVLTKCFEYLSKHLETEGLFRVPGSNREVSLLKFKIEDGDLDFSEVLIPYNICGLISTFFKELPEPLIPFDYYNDAILITKLGSKDKYIIGLRDLVLSLPPANLCMLRKLLEFLLTVEKKNEFNKMTISNISIIFGVTLLKDPDTVDPMKSLNNIQAQSTIIKYMLEYFNDIFKEASVVKAYRKSIVPKEPMDTTSISYLDPAESNGGSPRTSNTPYQQQHQLSSQSMANIKPRPPSRSKMMRETIVLSPRVSGGNNQVYANATMTRPMSRLFFDPEIIPSPPPTTTTTTTTTTNTTTTTTTTNTTPNNTTTVNIQQKPVPPKPNLIPRKLPPNPNYSTYPAPLPPRQPNTIPLAPIPPPKPNSTYKKQITQPPPPRKPTSPSPPIATLKPTSKSDFIPSTNNNLNNNNTTTTTSSLISIPKAKPPPPKRNNVVSPAIEEPINPNLNINSTTTTPTPPLASFKNNGTISSGSKSNPNLQNLLNTNQPLVSSNGPPNKPPPQPFELLKSKPITTTPTIKKGVTFSETPKISNSPPSPSSSSPSPPHNQPIIVNKPIPSKSAPPPVRTTSSPSIVTKKFVPTIPTQTTTASSSSTPTTPKNQHLSKDDSSIPPINTSQTNNNISNSSIPSPKSKSALSLSTPKDSITGKPIKPPSNSDLSISTTPLPPTSSSPTSSSPLQSPKISSPSVLTVSQKIALNEKIAANQAKKNPLSNSGGLKQISPDLIKSNNINK</sequence>
<organism>
    <name type="scientific">Dictyostelium discoideum</name>
    <name type="common">Social amoeba</name>
    <dbReference type="NCBI Taxonomy" id="44689"/>
    <lineage>
        <taxon>Eukaryota</taxon>
        <taxon>Amoebozoa</taxon>
        <taxon>Evosea</taxon>
        <taxon>Eumycetozoa</taxon>
        <taxon>Dictyostelia</taxon>
        <taxon>Dictyosteliales</taxon>
        <taxon>Dictyosteliaceae</taxon>
        <taxon>Dictyostelium</taxon>
    </lineage>
</organism>